<protein>
    <recommendedName>
        <fullName>Elongation factor G</fullName>
        <shortName>EF-G</shortName>
    </recommendedName>
</protein>
<feature type="initiator methionine" description="Removed" evidence="1">
    <location>
        <position position="1"/>
    </location>
</feature>
<feature type="chain" id="PRO_0000091215" description="Elongation factor G">
    <location>
        <begin position="2"/>
        <end position="693"/>
    </location>
</feature>
<feature type="domain" description="tr-type G">
    <location>
        <begin position="8"/>
        <end position="282"/>
    </location>
</feature>
<feature type="binding site" evidence="1">
    <location>
        <begin position="17"/>
        <end position="24"/>
    </location>
    <ligand>
        <name>GTP</name>
        <dbReference type="ChEBI" id="CHEBI:37565"/>
    </ligand>
</feature>
<feature type="binding site" evidence="1">
    <location>
        <begin position="81"/>
        <end position="85"/>
    </location>
    <ligand>
        <name>GTP</name>
        <dbReference type="ChEBI" id="CHEBI:37565"/>
    </ligand>
</feature>
<feature type="binding site" evidence="1">
    <location>
        <begin position="135"/>
        <end position="138"/>
    </location>
    <ligand>
        <name>GTP</name>
        <dbReference type="ChEBI" id="CHEBI:37565"/>
    </ligand>
</feature>
<organism>
    <name type="scientific">Staphylococcus aureus (strain Mu50 / ATCC 700699)</name>
    <dbReference type="NCBI Taxonomy" id="158878"/>
    <lineage>
        <taxon>Bacteria</taxon>
        <taxon>Bacillati</taxon>
        <taxon>Bacillota</taxon>
        <taxon>Bacilli</taxon>
        <taxon>Bacillales</taxon>
        <taxon>Staphylococcaceae</taxon>
        <taxon>Staphylococcus</taxon>
    </lineage>
</organism>
<accession>P68788</accession>
<accession>P81683</accession>
<accession>Q9X7M3</accession>
<reference key="1">
    <citation type="journal article" date="2001" name="Lancet">
        <title>Whole genome sequencing of meticillin-resistant Staphylococcus aureus.</title>
        <authorList>
            <person name="Kuroda M."/>
            <person name="Ohta T."/>
            <person name="Uchiyama I."/>
            <person name="Baba T."/>
            <person name="Yuzawa H."/>
            <person name="Kobayashi I."/>
            <person name="Cui L."/>
            <person name="Oguchi A."/>
            <person name="Aoki K."/>
            <person name="Nagai Y."/>
            <person name="Lian J.-Q."/>
            <person name="Ito T."/>
            <person name="Kanamori M."/>
            <person name="Matsumaru H."/>
            <person name="Maruyama A."/>
            <person name="Murakami H."/>
            <person name="Hosoyama A."/>
            <person name="Mizutani-Ui Y."/>
            <person name="Takahashi N.K."/>
            <person name="Sawano T."/>
            <person name="Inoue R."/>
            <person name="Kaito C."/>
            <person name="Sekimizu K."/>
            <person name="Hirakawa H."/>
            <person name="Kuhara S."/>
            <person name="Goto S."/>
            <person name="Yabuzaki J."/>
            <person name="Kanehisa M."/>
            <person name="Yamashita A."/>
            <person name="Oshima K."/>
            <person name="Furuya K."/>
            <person name="Yoshino C."/>
            <person name="Shiba T."/>
            <person name="Hattori M."/>
            <person name="Ogasawara N."/>
            <person name="Hayashi H."/>
            <person name="Hiramatsu K."/>
        </authorList>
    </citation>
    <scope>NUCLEOTIDE SEQUENCE [LARGE SCALE GENOMIC DNA]</scope>
    <source>
        <strain>Mu50 / ATCC 700699</strain>
    </source>
</reference>
<proteinExistence type="inferred from homology"/>
<dbReference type="EMBL" id="BA000017">
    <property type="protein sequence ID" value="BAB56709.1"/>
    <property type="molecule type" value="Genomic_DNA"/>
</dbReference>
<dbReference type="RefSeq" id="WP_000090315.1">
    <property type="nucleotide sequence ID" value="NC_002758.2"/>
</dbReference>
<dbReference type="SMR" id="P68788"/>
<dbReference type="KEGG" id="sav:SAV0547"/>
<dbReference type="HOGENOM" id="CLU_002794_4_1_9"/>
<dbReference type="PhylomeDB" id="P68788"/>
<dbReference type="Proteomes" id="UP000002481">
    <property type="component" value="Chromosome"/>
</dbReference>
<dbReference type="GO" id="GO:0005737">
    <property type="term" value="C:cytoplasm"/>
    <property type="evidence" value="ECO:0007669"/>
    <property type="project" value="UniProtKB-SubCell"/>
</dbReference>
<dbReference type="GO" id="GO:0005525">
    <property type="term" value="F:GTP binding"/>
    <property type="evidence" value="ECO:0007669"/>
    <property type="project" value="UniProtKB-UniRule"/>
</dbReference>
<dbReference type="GO" id="GO:0003924">
    <property type="term" value="F:GTPase activity"/>
    <property type="evidence" value="ECO:0007669"/>
    <property type="project" value="InterPro"/>
</dbReference>
<dbReference type="GO" id="GO:0003746">
    <property type="term" value="F:translation elongation factor activity"/>
    <property type="evidence" value="ECO:0007669"/>
    <property type="project" value="UniProtKB-UniRule"/>
</dbReference>
<dbReference type="GO" id="GO:0032790">
    <property type="term" value="P:ribosome disassembly"/>
    <property type="evidence" value="ECO:0007669"/>
    <property type="project" value="TreeGrafter"/>
</dbReference>
<dbReference type="CDD" id="cd01886">
    <property type="entry name" value="EF-G"/>
    <property type="match status" value="1"/>
</dbReference>
<dbReference type="CDD" id="cd16262">
    <property type="entry name" value="EFG_III"/>
    <property type="match status" value="1"/>
</dbReference>
<dbReference type="CDD" id="cd01434">
    <property type="entry name" value="EFG_mtEFG1_IV"/>
    <property type="match status" value="1"/>
</dbReference>
<dbReference type="CDD" id="cd03713">
    <property type="entry name" value="EFG_mtEFG_C"/>
    <property type="match status" value="1"/>
</dbReference>
<dbReference type="CDD" id="cd04088">
    <property type="entry name" value="EFG_mtEFG_II"/>
    <property type="match status" value="1"/>
</dbReference>
<dbReference type="FunFam" id="2.40.30.10:FF:000006">
    <property type="entry name" value="Elongation factor G"/>
    <property type="match status" value="1"/>
</dbReference>
<dbReference type="FunFam" id="3.30.230.10:FF:000003">
    <property type="entry name" value="Elongation factor G"/>
    <property type="match status" value="1"/>
</dbReference>
<dbReference type="FunFam" id="3.30.70.240:FF:000001">
    <property type="entry name" value="Elongation factor G"/>
    <property type="match status" value="1"/>
</dbReference>
<dbReference type="FunFam" id="3.30.70.870:FF:000001">
    <property type="entry name" value="Elongation factor G"/>
    <property type="match status" value="1"/>
</dbReference>
<dbReference type="FunFam" id="3.40.50.300:FF:000029">
    <property type="entry name" value="Elongation factor G"/>
    <property type="match status" value="1"/>
</dbReference>
<dbReference type="Gene3D" id="3.30.230.10">
    <property type="match status" value="1"/>
</dbReference>
<dbReference type="Gene3D" id="3.30.70.240">
    <property type="match status" value="1"/>
</dbReference>
<dbReference type="Gene3D" id="3.30.70.870">
    <property type="entry name" value="Elongation Factor G (Translational Gtpase), domain 3"/>
    <property type="match status" value="1"/>
</dbReference>
<dbReference type="Gene3D" id="3.40.50.300">
    <property type="entry name" value="P-loop containing nucleotide triphosphate hydrolases"/>
    <property type="match status" value="1"/>
</dbReference>
<dbReference type="Gene3D" id="2.40.30.10">
    <property type="entry name" value="Translation factors"/>
    <property type="match status" value="1"/>
</dbReference>
<dbReference type="HAMAP" id="MF_00054_B">
    <property type="entry name" value="EF_G_EF_2_B"/>
    <property type="match status" value="1"/>
</dbReference>
<dbReference type="InterPro" id="IPR041095">
    <property type="entry name" value="EFG_II"/>
</dbReference>
<dbReference type="InterPro" id="IPR009022">
    <property type="entry name" value="EFG_III"/>
</dbReference>
<dbReference type="InterPro" id="IPR035647">
    <property type="entry name" value="EFG_III/V"/>
</dbReference>
<dbReference type="InterPro" id="IPR047872">
    <property type="entry name" value="EFG_IV"/>
</dbReference>
<dbReference type="InterPro" id="IPR035649">
    <property type="entry name" value="EFG_V"/>
</dbReference>
<dbReference type="InterPro" id="IPR000640">
    <property type="entry name" value="EFG_V-like"/>
</dbReference>
<dbReference type="InterPro" id="IPR004161">
    <property type="entry name" value="EFTu-like_2"/>
</dbReference>
<dbReference type="InterPro" id="IPR031157">
    <property type="entry name" value="G_TR_CS"/>
</dbReference>
<dbReference type="InterPro" id="IPR027417">
    <property type="entry name" value="P-loop_NTPase"/>
</dbReference>
<dbReference type="InterPro" id="IPR020568">
    <property type="entry name" value="Ribosomal_Su5_D2-typ_SF"/>
</dbReference>
<dbReference type="InterPro" id="IPR014721">
    <property type="entry name" value="Ribsml_uS5_D2-typ_fold_subgr"/>
</dbReference>
<dbReference type="InterPro" id="IPR005225">
    <property type="entry name" value="Small_GTP-bd"/>
</dbReference>
<dbReference type="InterPro" id="IPR000795">
    <property type="entry name" value="T_Tr_GTP-bd_dom"/>
</dbReference>
<dbReference type="InterPro" id="IPR009000">
    <property type="entry name" value="Transl_B-barrel_sf"/>
</dbReference>
<dbReference type="InterPro" id="IPR004540">
    <property type="entry name" value="Transl_elong_EFG/EF2"/>
</dbReference>
<dbReference type="InterPro" id="IPR005517">
    <property type="entry name" value="Transl_elong_EFG/EF2_IV"/>
</dbReference>
<dbReference type="NCBIfam" id="TIGR00484">
    <property type="entry name" value="EF-G"/>
    <property type="match status" value="1"/>
</dbReference>
<dbReference type="NCBIfam" id="NF009379">
    <property type="entry name" value="PRK12740.1-3"/>
    <property type="match status" value="1"/>
</dbReference>
<dbReference type="NCBIfam" id="NF009381">
    <property type="entry name" value="PRK12740.1-5"/>
    <property type="match status" value="1"/>
</dbReference>
<dbReference type="NCBIfam" id="TIGR00231">
    <property type="entry name" value="small_GTP"/>
    <property type="match status" value="1"/>
</dbReference>
<dbReference type="PANTHER" id="PTHR43261:SF1">
    <property type="entry name" value="RIBOSOME-RELEASING FACTOR 2, MITOCHONDRIAL"/>
    <property type="match status" value="1"/>
</dbReference>
<dbReference type="PANTHER" id="PTHR43261">
    <property type="entry name" value="TRANSLATION ELONGATION FACTOR G-RELATED"/>
    <property type="match status" value="1"/>
</dbReference>
<dbReference type="Pfam" id="PF00679">
    <property type="entry name" value="EFG_C"/>
    <property type="match status" value="1"/>
</dbReference>
<dbReference type="Pfam" id="PF14492">
    <property type="entry name" value="EFG_III"/>
    <property type="match status" value="1"/>
</dbReference>
<dbReference type="Pfam" id="PF03764">
    <property type="entry name" value="EFG_IV"/>
    <property type="match status" value="1"/>
</dbReference>
<dbReference type="Pfam" id="PF00009">
    <property type="entry name" value="GTP_EFTU"/>
    <property type="match status" value="1"/>
</dbReference>
<dbReference type="Pfam" id="PF03144">
    <property type="entry name" value="GTP_EFTU_D2"/>
    <property type="match status" value="1"/>
</dbReference>
<dbReference type="PRINTS" id="PR00315">
    <property type="entry name" value="ELONGATNFCT"/>
</dbReference>
<dbReference type="SMART" id="SM00838">
    <property type="entry name" value="EFG_C"/>
    <property type="match status" value="1"/>
</dbReference>
<dbReference type="SMART" id="SM00889">
    <property type="entry name" value="EFG_IV"/>
    <property type="match status" value="1"/>
</dbReference>
<dbReference type="SUPFAM" id="SSF54980">
    <property type="entry name" value="EF-G C-terminal domain-like"/>
    <property type="match status" value="2"/>
</dbReference>
<dbReference type="SUPFAM" id="SSF52540">
    <property type="entry name" value="P-loop containing nucleoside triphosphate hydrolases"/>
    <property type="match status" value="1"/>
</dbReference>
<dbReference type="SUPFAM" id="SSF54211">
    <property type="entry name" value="Ribosomal protein S5 domain 2-like"/>
    <property type="match status" value="1"/>
</dbReference>
<dbReference type="SUPFAM" id="SSF50447">
    <property type="entry name" value="Translation proteins"/>
    <property type="match status" value="1"/>
</dbReference>
<dbReference type="PROSITE" id="PS00301">
    <property type="entry name" value="G_TR_1"/>
    <property type="match status" value="1"/>
</dbReference>
<dbReference type="PROSITE" id="PS51722">
    <property type="entry name" value="G_TR_2"/>
    <property type="match status" value="1"/>
</dbReference>
<keyword id="KW-0963">Cytoplasm</keyword>
<keyword id="KW-0251">Elongation factor</keyword>
<keyword id="KW-0342">GTP-binding</keyword>
<keyword id="KW-0547">Nucleotide-binding</keyword>
<keyword id="KW-0648">Protein biosynthesis</keyword>
<comment type="function">
    <text evidence="1">Catalyzes the GTP-dependent ribosomal translocation step during translation elongation. During this step, the ribosome changes from the pre-translocational (PRE) to the post-translocational (POST) state as the newly formed A-site-bound peptidyl-tRNA and P-site-bound deacylated tRNA move to the P and E sites, respectively. Catalyzes the coordinated movement of the two tRNA molecules, the mRNA and conformational changes in the ribosome (By similarity).</text>
</comment>
<comment type="subcellular location">
    <subcellularLocation>
        <location evidence="1">Cytoplasm</location>
    </subcellularLocation>
</comment>
<comment type="similarity">
    <text evidence="2">Belongs to the TRAFAC class translation factor GTPase superfamily. Classic translation factor GTPase family. EF-G/EF-2 subfamily.</text>
</comment>
<sequence>MAREFSLEKTRNIGIMAHIDAGKTTTTERILYYTGRIHKIGETHEGASQMDWMEQEQDRGITITSAATTAAWEGHRVNIIDTPGHVDFTVEVERSLRVLDGAVTVLDAQSGVEPQTETVWRQATTYGVPRIVFVNKMDKLGANFEYSVSTLHDRLQANAAPIQLPIGAEDEFEAIIDLVEMKCFKYTNDLGTEIEEIEIPEDHLDRAEEARASLIEAVAETSDELMEKYLGDEEISVSELKEAIRQATTNVEFYPVLCGTAFKNKGVQLMLDAVIDYLPSPLDVKPIIGHRASNPEEEVIAKADDSAEFAALAFKVMTDPYVGKLTFFRVYSGTMTSGSYVKNSTKGKRERVGRLLQMHANSRQEIDTVYSGDIAAAVGLKDTGTGDTLCGEKNDIILESMEFPEPVIHLSVEPKSKADQDKMTQALVKLQEEDPTFHAHTDEETGQVIIGGMGELHLDILVDRMKKEFNVECNVGAPMVSYRETFKSSAQVQGKFSRQSGGRGQYGDVHIEFTPNETGAGFEFENAIVGGVVPREYIPSVEAGLKDAMENGVLAGYPLIDVKAKLYDGSYHDVDSSEMAFKIAASLALKEAAKKCDPVILEPMMKVTIEMPEEYMGDIMGDVTSRRGRVDGMEPRGNAQVVNAYVPLSEMFGYATSLRSNTQGRGTYTMYFDHYAEVPKSIAEDIIKKNKGE</sequence>
<gene>
    <name type="primary">fusA</name>
    <name type="synonym">fus</name>
    <name type="ordered locus">SAV0547</name>
</gene>
<name>EFG_STAAM</name>
<evidence type="ECO:0000250" key="1"/>
<evidence type="ECO:0000305" key="2"/>